<reference key="1">
    <citation type="journal article" date="2000" name="Nature">
        <title>DNA sequence of both chromosomes of the cholera pathogen Vibrio cholerae.</title>
        <authorList>
            <person name="Heidelberg J.F."/>
            <person name="Eisen J.A."/>
            <person name="Nelson W.C."/>
            <person name="Clayton R.A."/>
            <person name="Gwinn M.L."/>
            <person name="Dodson R.J."/>
            <person name="Haft D.H."/>
            <person name="Hickey E.K."/>
            <person name="Peterson J.D."/>
            <person name="Umayam L.A."/>
            <person name="Gill S.R."/>
            <person name="Nelson K.E."/>
            <person name="Read T.D."/>
            <person name="Tettelin H."/>
            <person name="Richardson D.L."/>
            <person name="Ermolaeva M.D."/>
            <person name="Vamathevan J.J."/>
            <person name="Bass S."/>
            <person name="Qin H."/>
            <person name="Dragoi I."/>
            <person name="Sellers P."/>
            <person name="McDonald L.A."/>
            <person name="Utterback T.R."/>
            <person name="Fleischmann R.D."/>
            <person name="Nierman W.C."/>
            <person name="White O."/>
            <person name="Salzberg S.L."/>
            <person name="Smith H.O."/>
            <person name="Colwell R.R."/>
            <person name="Mekalanos J.J."/>
            <person name="Venter J.C."/>
            <person name="Fraser C.M."/>
        </authorList>
    </citation>
    <scope>NUCLEOTIDE SEQUENCE [LARGE SCALE GENOMIC DNA]</scope>
    <source>
        <strain>ATCC 39315 / El Tor Inaba N16961</strain>
    </source>
</reference>
<proteinExistence type="inferred from homology"/>
<sequence length="144" mass="14946">MLLNTLSPAAGSKHAPKRLGRGVGSGLGKTGGRGHKGQKSRSGGKVRPGFEGGQMPLKQRLPKFGFTSRKSFVSAEVRLSELAKVTGDVVDLNALKAANLVTKNIEFAKIVLSGEINKAVTVKGLRVTKGAKAAIEAAGGKIEE</sequence>
<comment type="function">
    <text evidence="1">Binds to the 23S rRNA.</text>
</comment>
<comment type="subunit">
    <text evidence="1">Part of the 50S ribosomal subunit.</text>
</comment>
<comment type="similarity">
    <text evidence="1">Belongs to the universal ribosomal protein uL15 family.</text>
</comment>
<name>RL15_VIBCH</name>
<organism>
    <name type="scientific">Vibrio cholerae serotype O1 (strain ATCC 39315 / El Tor Inaba N16961)</name>
    <dbReference type="NCBI Taxonomy" id="243277"/>
    <lineage>
        <taxon>Bacteria</taxon>
        <taxon>Pseudomonadati</taxon>
        <taxon>Pseudomonadota</taxon>
        <taxon>Gammaproteobacteria</taxon>
        <taxon>Vibrionales</taxon>
        <taxon>Vibrionaceae</taxon>
        <taxon>Vibrio</taxon>
    </lineage>
</organism>
<evidence type="ECO:0000255" key="1">
    <source>
        <dbReference type="HAMAP-Rule" id="MF_01341"/>
    </source>
</evidence>
<evidence type="ECO:0000256" key="2">
    <source>
        <dbReference type="SAM" id="MobiDB-lite"/>
    </source>
</evidence>
<evidence type="ECO:0000305" key="3"/>
<gene>
    <name evidence="1" type="primary">rplO</name>
    <name type="ordered locus">VC_2577</name>
</gene>
<keyword id="KW-1185">Reference proteome</keyword>
<keyword id="KW-0687">Ribonucleoprotein</keyword>
<keyword id="KW-0689">Ribosomal protein</keyword>
<keyword id="KW-0694">RNA-binding</keyword>
<keyword id="KW-0699">rRNA-binding</keyword>
<feature type="chain" id="PRO_0000104849" description="Large ribosomal subunit protein uL15">
    <location>
        <begin position="1"/>
        <end position="144"/>
    </location>
</feature>
<feature type="region of interest" description="Disordered" evidence="2">
    <location>
        <begin position="1"/>
        <end position="57"/>
    </location>
</feature>
<feature type="compositionally biased region" description="Gly residues" evidence="2">
    <location>
        <begin position="21"/>
        <end position="31"/>
    </location>
</feature>
<feature type="compositionally biased region" description="Basic residues" evidence="2">
    <location>
        <begin position="32"/>
        <end position="44"/>
    </location>
</feature>
<accession>Q9KP03</accession>
<protein>
    <recommendedName>
        <fullName evidence="1">Large ribosomal subunit protein uL15</fullName>
    </recommendedName>
    <alternativeName>
        <fullName evidence="3">50S ribosomal protein L15</fullName>
    </alternativeName>
</protein>
<dbReference type="EMBL" id="AE003852">
    <property type="protein sequence ID" value="AAF95718.1"/>
    <property type="molecule type" value="Genomic_DNA"/>
</dbReference>
<dbReference type="PIR" id="C82057">
    <property type="entry name" value="C82057"/>
</dbReference>
<dbReference type="RefSeq" id="NP_232205.1">
    <property type="nucleotide sequence ID" value="NC_002505.1"/>
</dbReference>
<dbReference type="RefSeq" id="WP_000926115.1">
    <property type="nucleotide sequence ID" value="NZ_LT906614.1"/>
</dbReference>
<dbReference type="SMR" id="Q9KP03"/>
<dbReference type="STRING" id="243277.VC_2577"/>
<dbReference type="DNASU" id="2615594"/>
<dbReference type="EnsemblBacteria" id="AAF95718">
    <property type="protein sequence ID" value="AAF95718"/>
    <property type="gene ID" value="VC_2577"/>
</dbReference>
<dbReference type="GeneID" id="89513446"/>
<dbReference type="KEGG" id="vch:VC_2577"/>
<dbReference type="PATRIC" id="fig|243277.26.peg.2456"/>
<dbReference type="eggNOG" id="COG0200">
    <property type="taxonomic scope" value="Bacteria"/>
</dbReference>
<dbReference type="HOGENOM" id="CLU_055188_4_2_6"/>
<dbReference type="Proteomes" id="UP000000584">
    <property type="component" value="Chromosome 1"/>
</dbReference>
<dbReference type="GO" id="GO:0022625">
    <property type="term" value="C:cytosolic large ribosomal subunit"/>
    <property type="evidence" value="ECO:0000318"/>
    <property type="project" value="GO_Central"/>
</dbReference>
<dbReference type="GO" id="GO:0019843">
    <property type="term" value="F:rRNA binding"/>
    <property type="evidence" value="ECO:0007669"/>
    <property type="project" value="UniProtKB-UniRule"/>
</dbReference>
<dbReference type="GO" id="GO:0003735">
    <property type="term" value="F:structural constituent of ribosome"/>
    <property type="evidence" value="ECO:0000318"/>
    <property type="project" value="GO_Central"/>
</dbReference>
<dbReference type="GO" id="GO:0006412">
    <property type="term" value="P:translation"/>
    <property type="evidence" value="ECO:0007669"/>
    <property type="project" value="UniProtKB-UniRule"/>
</dbReference>
<dbReference type="FunFam" id="3.100.10.10:FF:000003">
    <property type="entry name" value="50S ribosomal protein L15"/>
    <property type="match status" value="1"/>
</dbReference>
<dbReference type="Gene3D" id="3.100.10.10">
    <property type="match status" value="1"/>
</dbReference>
<dbReference type="HAMAP" id="MF_01341">
    <property type="entry name" value="Ribosomal_uL15"/>
    <property type="match status" value="1"/>
</dbReference>
<dbReference type="InterPro" id="IPR030878">
    <property type="entry name" value="Ribosomal_uL15"/>
</dbReference>
<dbReference type="InterPro" id="IPR021131">
    <property type="entry name" value="Ribosomal_uL15/eL18"/>
</dbReference>
<dbReference type="InterPro" id="IPR036227">
    <property type="entry name" value="Ribosomal_uL15/eL18_sf"/>
</dbReference>
<dbReference type="InterPro" id="IPR005749">
    <property type="entry name" value="Ribosomal_uL15_bac-type"/>
</dbReference>
<dbReference type="InterPro" id="IPR001196">
    <property type="entry name" value="Ribosomal_uL15_CS"/>
</dbReference>
<dbReference type="NCBIfam" id="TIGR01071">
    <property type="entry name" value="rplO_bact"/>
    <property type="match status" value="1"/>
</dbReference>
<dbReference type="PANTHER" id="PTHR12934">
    <property type="entry name" value="50S RIBOSOMAL PROTEIN L15"/>
    <property type="match status" value="1"/>
</dbReference>
<dbReference type="PANTHER" id="PTHR12934:SF11">
    <property type="entry name" value="LARGE RIBOSOMAL SUBUNIT PROTEIN UL15M"/>
    <property type="match status" value="1"/>
</dbReference>
<dbReference type="Pfam" id="PF00828">
    <property type="entry name" value="Ribosomal_L27A"/>
    <property type="match status" value="1"/>
</dbReference>
<dbReference type="SUPFAM" id="SSF52080">
    <property type="entry name" value="Ribosomal proteins L15p and L18e"/>
    <property type="match status" value="1"/>
</dbReference>
<dbReference type="PROSITE" id="PS00475">
    <property type="entry name" value="RIBOSOMAL_L15"/>
    <property type="match status" value="1"/>
</dbReference>